<evidence type="ECO:0000250" key="1"/>
<evidence type="ECO:0000255" key="2">
    <source>
        <dbReference type="PROSITE-ProRule" id="PRU01033"/>
    </source>
</evidence>
<evidence type="ECO:0000256" key="3">
    <source>
        <dbReference type="SAM" id="MobiDB-lite"/>
    </source>
</evidence>
<evidence type="ECO:0000269" key="4">
    <source>
    </source>
</evidence>
<evidence type="ECO:0000305" key="5"/>
<name>LSH4_ARATH</name>
<protein>
    <recommendedName>
        <fullName>Protein LIGHT-DEPENDENT SHORT HYPOCOTYLS 4</fullName>
    </recommendedName>
    <alternativeName>
        <fullName>Protein ORGAN BOUNDARY 4</fullName>
    </alternativeName>
</protein>
<proteinExistence type="evidence at protein level"/>
<feature type="chain" id="PRO_0000425291" description="Protein LIGHT-DEPENDENT SHORT HYPOCOTYLS 4">
    <location>
        <begin position="1"/>
        <end position="195"/>
    </location>
</feature>
<feature type="domain" description="ALOG" evidence="2">
    <location>
        <begin position="48"/>
        <end position="175"/>
    </location>
</feature>
<feature type="region of interest" description="Disordered" evidence="3">
    <location>
        <begin position="28"/>
        <end position="51"/>
    </location>
</feature>
<feature type="region of interest" description="Disordered" evidence="3">
    <location>
        <begin position="162"/>
        <end position="195"/>
    </location>
</feature>
<feature type="short sequence motif" description="Nuclear localization signal" evidence="1">
    <location>
        <begin position="173"/>
        <end position="177"/>
    </location>
</feature>
<feature type="compositionally biased region" description="Low complexity" evidence="3">
    <location>
        <begin position="28"/>
        <end position="38"/>
    </location>
</feature>
<organism>
    <name type="scientific">Arabidopsis thaliana</name>
    <name type="common">Mouse-ear cress</name>
    <dbReference type="NCBI Taxonomy" id="3702"/>
    <lineage>
        <taxon>Eukaryota</taxon>
        <taxon>Viridiplantae</taxon>
        <taxon>Streptophyta</taxon>
        <taxon>Embryophyta</taxon>
        <taxon>Tracheophyta</taxon>
        <taxon>Spermatophyta</taxon>
        <taxon>Magnoliopsida</taxon>
        <taxon>eudicotyledons</taxon>
        <taxon>Gunneridae</taxon>
        <taxon>Pentapetalae</taxon>
        <taxon>rosids</taxon>
        <taxon>malvids</taxon>
        <taxon>Brassicales</taxon>
        <taxon>Brassicaceae</taxon>
        <taxon>Camelineae</taxon>
        <taxon>Arabidopsis</taxon>
    </lineage>
</organism>
<accession>Q9LW68</accession>
<accession>Q6NNL1</accession>
<sequence>MDHIIGFMGTTNMSHNTNLMIAAAATTTTTSSSSSSSSGGSGTNQLSRYENQKRRDWNTFGQYLRNHRPPLSLSRCSGAHVLEFLRYLDQFGKTKVHTHLCPFFGHPNPPAPCACPLRQAWGSLDALIGRLRAAFEENGGSPETNPFGARAVRLYLREVRDSQAKARGISYEKKKRKRPPPPLPPAQPAISSSPN</sequence>
<dbReference type="EMBL" id="AB015474">
    <property type="protein sequence ID" value="BAB02272.1"/>
    <property type="molecule type" value="Genomic_DNA"/>
</dbReference>
<dbReference type="EMBL" id="AP000733">
    <property type="protein sequence ID" value="BAB02272.1"/>
    <property type="status" value="JOINED"/>
    <property type="molecule type" value="Genomic_DNA"/>
</dbReference>
<dbReference type="EMBL" id="CP002686">
    <property type="protein sequence ID" value="AEE76748.1"/>
    <property type="molecule type" value="Genomic_DNA"/>
</dbReference>
<dbReference type="EMBL" id="BT010794">
    <property type="protein sequence ID" value="AAR24161.1"/>
    <property type="status" value="ALT_INIT"/>
    <property type="molecule type" value="mRNA"/>
</dbReference>
<dbReference type="EMBL" id="BT011275">
    <property type="protein sequence ID" value="AAR92311.1"/>
    <property type="molecule type" value="mRNA"/>
</dbReference>
<dbReference type="RefSeq" id="NP_001078202.2">
    <property type="nucleotide sequence ID" value="NM_001084733.2"/>
</dbReference>
<dbReference type="SMR" id="Q9LW68"/>
<dbReference type="BioGRID" id="7240">
    <property type="interactions" value="3"/>
</dbReference>
<dbReference type="FunCoup" id="Q9LW68">
    <property type="interactions" value="108"/>
</dbReference>
<dbReference type="IntAct" id="Q9LW68">
    <property type="interactions" value="3"/>
</dbReference>
<dbReference type="STRING" id="3702.Q9LW68"/>
<dbReference type="PaxDb" id="3702-AT3G23290.2"/>
<dbReference type="ProteomicsDB" id="238531"/>
<dbReference type="EnsemblPlants" id="AT3G23290.2">
    <property type="protein sequence ID" value="AT3G23290.2"/>
    <property type="gene ID" value="AT3G23290"/>
</dbReference>
<dbReference type="GeneID" id="821908"/>
<dbReference type="Gramene" id="AT3G23290.2">
    <property type="protein sequence ID" value="AT3G23290.2"/>
    <property type="gene ID" value="AT3G23290"/>
</dbReference>
<dbReference type="KEGG" id="ath:AT3G23290"/>
<dbReference type="Araport" id="AT3G23290"/>
<dbReference type="TAIR" id="AT3G23290">
    <property type="gene designation" value="LSH4"/>
</dbReference>
<dbReference type="eggNOG" id="ENOG502QT0B">
    <property type="taxonomic scope" value="Eukaryota"/>
</dbReference>
<dbReference type="HOGENOM" id="CLU_071168_1_0_1"/>
<dbReference type="InParanoid" id="Q9LW68"/>
<dbReference type="OMA" id="NNSMTML"/>
<dbReference type="PhylomeDB" id="Q9LW68"/>
<dbReference type="PRO" id="PR:Q9LW68"/>
<dbReference type="Proteomes" id="UP000006548">
    <property type="component" value="Chromosome 3"/>
</dbReference>
<dbReference type="ExpressionAtlas" id="Q9LW68">
    <property type="expression patterns" value="baseline and differential"/>
</dbReference>
<dbReference type="GO" id="GO:0005634">
    <property type="term" value="C:nucleus"/>
    <property type="evidence" value="ECO:0000314"/>
    <property type="project" value="UniProtKB"/>
</dbReference>
<dbReference type="GO" id="GO:0003677">
    <property type="term" value="F:DNA binding"/>
    <property type="evidence" value="ECO:0007669"/>
    <property type="project" value="UniProtKB-KW"/>
</dbReference>
<dbReference type="GO" id="GO:0009299">
    <property type="term" value="P:mRNA transcription"/>
    <property type="evidence" value="ECO:0000250"/>
    <property type="project" value="UniProtKB"/>
</dbReference>
<dbReference type="GO" id="GO:0090698">
    <property type="term" value="P:post-embryonic plant morphogenesis"/>
    <property type="evidence" value="ECO:0000315"/>
    <property type="project" value="UniProtKB"/>
</dbReference>
<dbReference type="InterPro" id="IPR040222">
    <property type="entry name" value="ALOG"/>
</dbReference>
<dbReference type="InterPro" id="IPR006936">
    <property type="entry name" value="ALOG_dom"/>
</dbReference>
<dbReference type="PANTHER" id="PTHR31165">
    <property type="entry name" value="PROTEIN G1-LIKE2"/>
    <property type="match status" value="1"/>
</dbReference>
<dbReference type="PANTHER" id="PTHR31165:SF115">
    <property type="entry name" value="PROTEIN LIGHT-DEPENDENT SHORT HYPOCOTYLS 4"/>
    <property type="match status" value="1"/>
</dbReference>
<dbReference type="Pfam" id="PF04852">
    <property type="entry name" value="ALOG_dom"/>
    <property type="match status" value="1"/>
</dbReference>
<dbReference type="PROSITE" id="PS51697">
    <property type="entry name" value="ALOG"/>
    <property type="match status" value="1"/>
</dbReference>
<keyword id="KW-0217">Developmental protein</keyword>
<keyword id="KW-0238">DNA-binding</keyword>
<keyword id="KW-0539">Nucleus</keyword>
<keyword id="KW-1185">Reference proteome</keyword>
<keyword id="KW-0804">Transcription</keyword>
<keyword id="KW-0805">Transcription regulation</keyword>
<comment type="function">
    <text evidence="1 4">Probable transcription regulator that acts as a developmental regulator by promoting cell growth in response to light (By similarity). May suppress organ differentiation in the boundary region.</text>
</comment>
<comment type="subcellular location">
    <subcellularLocation>
        <location evidence="4">Nucleus</location>
    </subcellularLocation>
</comment>
<comment type="tissue specificity">
    <text evidence="4">Induced by NAC054/CUC1 and NAC098/CUC2 in shoot organ boundary cells.</text>
</comment>
<comment type="developmental stage">
    <text evidence="4">Accumulates at the boundaries between the apical meristems and lateral organs in embryos, seedlings, and mature plants, and at the root apical meristem and in distinct cell files surrounding this area. First observed in the shoot apex of early-heart embryos. Within the apex of the late-heart stage embryo, the signal is detected in the peripheral region but not in the central region. At the bent-cotyledon stage, accumulates in boundary cells located between the shoot apical meristem (SAM) and the cotyledon primordia. In seedlings, weakly expressed in the basal cells of the leaf primordia. During the reproductive phase, present in boundary cells between the SAM and the flower primordia, and in boundary cells between the floral meristem and sepal primordia. In developing flowers, confined to regions that surround the floral organs at the base.</text>
</comment>
<comment type="similarity">
    <text evidence="5">Belongs to the plant homeotic and developmental regulators ALOG protein family.</text>
</comment>
<comment type="sequence caution" evidence="5">
    <conflict type="erroneous initiation">
        <sequence resource="EMBL-CDS" id="AAR24161"/>
    </conflict>
    <text>Truncated N-terminus.</text>
</comment>
<reference key="1">
    <citation type="journal article" date="2000" name="DNA Res.">
        <title>Structural analysis of Arabidopsis thaliana chromosome 3. I. Sequence features of the regions of 4,504,864 bp covered by sixty P1 and TAC clones.</title>
        <authorList>
            <person name="Sato S."/>
            <person name="Nakamura Y."/>
            <person name="Kaneko T."/>
            <person name="Katoh T."/>
            <person name="Asamizu E."/>
            <person name="Tabata S."/>
        </authorList>
    </citation>
    <scope>NUCLEOTIDE SEQUENCE [LARGE SCALE GENOMIC DNA]</scope>
    <source>
        <strain>cv. Columbia</strain>
    </source>
</reference>
<reference key="2">
    <citation type="journal article" date="2000" name="DNA Res.">
        <title>Structural analysis of Arabidopsis thaliana chromosome 3. II. Sequence features of the 4,251,695 bp regions covered by 90 P1, TAC and BAC clones.</title>
        <authorList>
            <person name="Kaneko T."/>
            <person name="Katoh T."/>
            <person name="Sato S."/>
            <person name="Nakamura Y."/>
            <person name="Asamizu E."/>
            <person name="Tabata S."/>
        </authorList>
    </citation>
    <scope>NUCLEOTIDE SEQUENCE [LARGE SCALE GENOMIC DNA]</scope>
    <source>
        <strain>cv. Columbia</strain>
    </source>
</reference>
<reference key="3">
    <citation type="journal article" date="2017" name="Plant J.">
        <title>Araport11: a complete reannotation of the Arabidopsis thaliana reference genome.</title>
        <authorList>
            <person name="Cheng C.Y."/>
            <person name="Krishnakumar V."/>
            <person name="Chan A.P."/>
            <person name="Thibaud-Nissen F."/>
            <person name="Schobel S."/>
            <person name="Town C.D."/>
        </authorList>
    </citation>
    <scope>GENOME REANNOTATION</scope>
    <source>
        <strain>cv. Columbia</strain>
    </source>
</reference>
<reference key="4">
    <citation type="submission" date="2003-11" db="EMBL/GenBank/DDBJ databases">
        <title>Arabidopsis cDNA clones.</title>
        <authorList>
            <person name="Cheuk R.F."/>
            <person name="Chen H."/>
            <person name="Kim C.J."/>
            <person name="Shinn P."/>
            <person name="Ecker J.R."/>
        </authorList>
    </citation>
    <scope>NUCLEOTIDE SEQUENCE [LARGE SCALE MRNA] OF 3-96</scope>
</reference>
<reference key="5">
    <citation type="journal article" date="2004" name="Plant J.">
        <title>Overexpression of LSH1, a member of an uncharacterised gene family, causes enhanced light regulation of seedling development.</title>
        <authorList>
            <person name="Zhao L."/>
            <person name="Nakazawa M."/>
            <person name="Takase T."/>
            <person name="Manabe K."/>
            <person name="Kobayashi M."/>
            <person name="Seki M."/>
            <person name="Shinozaki K."/>
            <person name="Matsui M."/>
        </authorList>
    </citation>
    <scope>GENE FAMILY</scope>
    <scope>NOMENCLATURE</scope>
    <source>
        <strain>cv. Columbia</strain>
    </source>
</reference>
<reference key="6">
    <citation type="journal article" date="2011" name="Plant J.">
        <title>CUP-SHAPED COTYLEDON1 transcription factor activates the expression of LSH4 and LSH3, two members of the ALOG gene family, in shoot organ boundary cells.</title>
        <authorList>
            <person name="Takeda S."/>
            <person name="Hanano K."/>
            <person name="Kariya A."/>
            <person name="Shimizu S."/>
            <person name="Zhao L."/>
            <person name="Matsui M."/>
            <person name="Tasaka M."/>
            <person name="Aida M."/>
        </authorList>
    </citation>
    <scope>FUNCTION</scope>
    <scope>TISSUE SPECIFICITY</scope>
    <scope>SUBCELLULAR LOCATION</scope>
    <scope>DEVELOPMENTAL STAGE</scope>
</reference>
<reference key="7">
    <citation type="journal article" date="2011" name="Proc. Natl. Acad. Sci. U.S.A.">
        <title>Organ boundary1 defines a gene expressed at the junction between the shoot apical meristem and lateral organs.</title>
        <authorList>
            <person name="Cho E."/>
            <person name="Zambryski P.C."/>
        </authorList>
    </citation>
    <scope>GENE FAMILY</scope>
</reference>
<reference key="8">
    <citation type="journal article" date="2012" name="Biol. Direct">
        <title>ALOG domains: provenance of plant homeotic and developmental regulators from the DNA-binding domain of a novel class of DIRS1-type retroposons.</title>
        <authorList>
            <person name="Iyer L.M."/>
            <person name="Aravind L."/>
        </authorList>
    </citation>
    <scope>DNA-BINDING</scope>
    <scope>GENE FAMILY</scope>
</reference>
<gene>
    <name type="primary">LSH4</name>
    <name type="synonym">OBO4</name>
    <name type="ordered locus">At3g23290</name>
    <name type="ORF">MLM24</name>
</gene>